<gene>
    <name evidence="1" type="primary">psd</name>
    <name type="ordered locus">STH1715</name>
</gene>
<reference key="1">
    <citation type="journal article" date="2004" name="Nucleic Acids Res.">
        <title>Genome sequence of Symbiobacterium thermophilum, an uncultivable bacterium that depends on microbial commensalism.</title>
        <authorList>
            <person name="Ueda K."/>
            <person name="Yamashita A."/>
            <person name="Ishikawa J."/>
            <person name="Shimada M."/>
            <person name="Watsuji T."/>
            <person name="Morimura K."/>
            <person name="Ikeda H."/>
            <person name="Hattori M."/>
            <person name="Beppu T."/>
        </authorList>
    </citation>
    <scope>NUCLEOTIDE SEQUENCE [LARGE SCALE GENOMIC DNA]</scope>
    <source>
        <strain>DSM 24528 / JCM 14929 / IAM 14863 / T</strain>
    </source>
</reference>
<proteinExistence type="inferred from homology"/>
<dbReference type="EC" id="4.1.1.65" evidence="1"/>
<dbReference type="EMBL" id="AP006840">
    <property type="protein sequence ID" value="BAD40700.1"/>
    <property type="molecule type" value="Genomic_DNA"/>
</dbReference>
<dbReference type="SMR" id="Q67NP3"/>
<dbReference type="STRING" id="292459.STH1715"/>
<dbReference type="KEGG" id="sth:STH1715"/>
<dbReference type="eggNOG" id="COG0688">
    <property type="taxonomic scope" value="Bacteria"/>
</dbReference>
<dbReference type="HOGENOM" id="CLU_072492_2_0_9"/>
<dbReference type="UniPathway" id="UPA00558">
    <property type="reaction ID" value="UER00616"/>
</dbReference>
<dbReference type="Proteomes" id="UP000000417">
    <property type="component" value="Chromosome"/>
</dbReference>
<dbReference type="GO" id="GO:0005886">
    <property type="term" value="C:plasma membrane"/>
    <property type="evidence" value="ECO:0007669"/>
    <property type="project" value="UniProtKB-SubCell"/>
</dbReference>
<dbReference type="GO" id="GO:0004609">
    <property type="term" value="F:phosphatidylserine decarboxylase activity"/>
    <property type="evidence" value="ECO:0007669"/>
    <property type="project" value="UniProtKB-UniRule"/>
</dbReference>
<dbReference type="GO" id="GO:0006646">
    <property type="term" value="P:phosphatidylethanolamine biosynthetic process"/>
    <property type="evidence" value="ECO:0007669"/>
    <property type="project" value="UniProtKB-UniRule"/>
</dbReference>
<dbReference type="HAMAP" id="MF_00664">
    <property type="entry name" value="PS_decarb_PSD_A"/>
    <property type="match status" value="1"/>
</dbReference>
<dbReference type="InterPro" id="IPR003817">
    <property type="entry name" value="PS_Dcarbxylase"/>
</dbReference>
<dbReference type="InterPro" id="IPR033175">
    <property type="entry name" value="PSD-A"/>
</dbReference>
<dbReference type="NCBIfam" id="NF003678">
    <property type="entry name" value="PRK05305.1-2"/>
    <property type="match status" value="1"/>
</dbReference>
<dbReference type="NCBIfam" id="NF003685">
    <property type="entry name" value="PRK05305.2-5"/>
    <property type="match status" value="1"/>
</dbReference>
<dbReference type="PANTHER" id="PTHR35809">
    <property type="entry name" value="ARCHAETIDYLSERINE DECARBOXYLASE PROENZYME-RELATED"/>
    <property type="match status" value="1"/>
</dbReference>
<dbReference type="PANTHER" id="PTHR35809:SF1">
    <property type="entry name" value="ARCHAETIDYLSERINE DECARBOXYLASE PROENZYME-RELATED"/>
    <property type="match status" value="1"/>
</dbReference>
<dbReference type="Pfam" id="PF02666">
    <property type="entry name" value="PS_Dcarbxylase"/>
    <property type="match status" value="1"/>
</dbReference>
<accession>Q67NP3</accession>
<feature type="chain" id="PRO_0000029813" description="Phosphatidylserine decarboxylase beta chain" evidence="1">
    <location>
        <begin position="1"/>
        <end position="182"/>
    </location>
</feature>
<feature type="chain" id="PRO_0000029814" description="Phosphatidylserine decarboxylase alpha chain" evidence="1">
    <location>
        <begin position="183"/>
        <end position="215"/>
    </location>
</feature>
<feature type="active site" description="Schiff-base intermediate with substrate; via pyruvic acid" evidence="1">
    <location>
        <position position="183"/>
    </location>
</feature>
<feature type="site" description="Cleavage (non-hydrolytic); by autocatalysis" evidence="1">
    <location>
        <begin position="182"/>
        <end position="183"/>
    </location>
</feature>
<feature type="modified residue" description="Pyruvic acid (Ser); by autocatalysis" evidence="1">
    <location>
        <position position="183"/>
    </location>
</feature>
<organism>
    <name type="scientific">Symbiobacterium thermophilum (strain DSM 24528 / JCM 14929 / IAM 14863 / T)</name>
    <dbReference type="NCBI Taxonomy" id="292459"/>
    <lineage>
        <taxon>Bacteria</taxon>
        <taxon>Bacillati</taxon>
        <taxon>Bacillota</taxon>
        <taxon>Clostridia</taxon>
        <taxon>Eubacteriales</taxon>
        <taxon>Symbiobacteriaceae</taxon>
        <taxon>Symbiobacterium</taxon>
    </lineage>
</organism>
<keyword id="KW-1003">Cell membrane</keyword>
<keyword id="KW-0210">Decarboxylase</keyword>
<keyword id="KW-0444">Lipid biosynthesis</keyword>
<keyword id="KW-0443">Lipid metabolism</keyword>
<keyword id="KW-0456">Lyase</keyword>
<keyword id="KW-0472">Membrane</keyword>
<keyword id="KW-0594">Phospholipid biosynthesis</keyword>
<keyword id="KW-1208">Phospholipid metabolism</keyword>
<keyword id="KW-0670">Pyruvate</keyword>
<keyword id="KW-1185">Reference proteome</keyword>
<keyword id="KW-0865">Zymogen</keyword>
<name>PSD_SYMTH</name>
<sequence length="215" mass="23744">MSDMRRPIIAREGWPFVGALVALAVLALFVHWALGAVLAGLALFVMWFFRDPERPIPREDGLVVSPADGRVMFVREVEEPRFVGGRALLVSIFLSVFDVHINRSPVAGEVTYREYVPGKFLAAWDDTVGEVNERAYLGLVTDGGHRVLVSQVAGLLARRIVTWPAVGDRLDRGQRFGLIRFGSCTQVWLPADSEVLVRPGDRVVAGQTVIGRLPQ</sequence>
<comment type="function">
    <text evidence="1">Catalyzes the formation of phosphatidylethanolamine (PtdEtn) from phosphatidylserine (PtdSer).</text>
</comment>
<comment type="catalytic activity">
    <reaction evidence="1">
        <text>a 1,2-diacyl-sn-glycero-3-phospho-L-serine + H(+) = a 1,2-diacyl-sn-glycero-3-phosphoethanolamine + CO2</text>
        <dbReference type="Rhea" id="RHEA:20828"/>
        <dbReference type="ChEBI" id="CHEBI:15378"/>
        <dbReference type="ChEBI" id="CHEBI:16526"/>
        <dbReference type="ChEBI" id="CHEBI:57262"/>
        <dbReference type="ChEBI" id="CHEBI:64612"/>
        <dbReference type="EC" id="4.1.1.65"/>
    </reaction>
</comment>
<comment type="cofactor">
    <cofactor evidence="1">
        <name>pyruvate</name>
        <dbReference type="ChEBI" id="CHEBI:15361"/>
    </cofactor>
    <text evidence="1">Binds 1 pyruvoyl group covalently per subunit.</text>
</comment>
<comment type="pathway">
    <text evidence="1">Phospholipid metabolism; phosphatidylethanolamine biosynthesis; phosphatidylethanolamine from CDP-diacylglycerol: step 2/2.</text>
</comment>
<comment type="subunit">
    <text evidence="1">Heterodimer of a large membrane-associated beta subunit and a small pyruvoyl-containing alpha subunit.</text>
</comment>
<comment type="subcellular location">
    <subcellularLocation>
        <location evidence="1">Cell membrane</location>
        <topology evidence="1">Peripheral membrane protein</topology>
    </subcellularLocation>
</comment>
<comment type="PTM">
    <text evidence="1">Is synthesized initially as an inactive proenzyme. Formation of the active enzyme involves a self-maturation process in which the active site pyruvoyl group is generated from an internal serine residue via an autocatalytic post-translational modification. Two non-identical subunits are generated from the proenzyme in this reaction, and the pyruvate is formed at the N-terminus of the alpha chain, which is derived from the carboxyl end of the proenzyme. The post-translation cleavage follows an unusual pathway, termed non-hydrolytic serinolysis, in which the side chain hydroxyl group of the serine supplies its oxygen atom to form the C-terminus of the beta chain, while the remainder of the serine residue undergoes an oxidative deamination to produce ammonia and the pyruvoyl prosthetic group on the alpha chain.</text>
</comment>
<comment type="similarity">
    <text evidence="1">Belongs to the phosphatidylserine decarboxylase family. PSD-A subfamily.</text>
</comment>
<evidence type="ECO:0000255" key="1">
    <source>
        <dbReference type="HAMAP-Rule" id="MF_00664"/>
    </source>
</evidence>
<protein>
    <recommendedName>
        <fullName evidence="1">Phosphatidylserine decarboxylase proenzyme</fullName>
        <ecNumber evidence="1">4.1.1.65</ecNumber>
    </recommendedName>
    <component>
        <recommendedName>
            <fullName evidence="1">Phosphatidylserine decarboxylase alpha chain</fullName>
        </recommendedName>
    </component>
    <component>
        <recommendedName>
            <fullName evidence="1">Phosphatidylserine decarboxylase beta chain</fullName>
        </recommendedName>
    </component>
</protein>